<proteinExistence type="inferred from homology"/>
<sequence>MSKQEAVSELTKQQAQAELTPLREQLKKWGAEYYEQDNPSVEDYVYDRAYQRLVEIEQRFPDLVVPDSPTQRVGGAAESQLNKVTHEIPMLSMGDVFSLAELADFNRRQQDNSDVKVDFDYNLELKIDGLSLSLVYENGRLVQGSTRGNGTIGEDVTENVKTIKSIPQVLPEPLSLEFRGECYMPKEAFVKLNERREAEGQPVFANPRNAAAGSLRQLDPKVTAARQLDTFMYYVPDYQALGVTTQAQALEKMRALGFAVNPNYRVVHSQAELTAYIEEYTKKRDQLPYGIDGIVEKVNDLATQVALGNTVKVPRWEIAYKFPPEEQATVVRDIEWTVGRTGNVTPTAVMDPVQLAGTTVSRASLHNPDYLVEKDIRLGDTVLLHKAGDIIPEISRVIIEKRPADSKPYEVPTTCPECGADLVHLDDEVALRCVNPMCPAQIKEGLAHFASRNAMNIDGLGPKIIEQLWDKGMVKDVADLYRLEAAQLLTLPKFGEKSISNLLTAIANSRHNSCERLLFGLGIRHVGAKVAQLLAAEFKSVDALMAADAATISAVDSIGPIIGDAVATYFQNEQVHQLIAELKEVGVNMDYLAPTTSATESAEWAGKRVVLTGKLTKMTRGQAQEWLSARGASVTGSVSKKTDLLIAGEKAGSKLEKAQTLGIEVWDEDRFDQAMKEEN</sequence>
<gene>
    <name evidence="1" type="primary">ligA</name>
    <name type="ordered locus">LAF_1475</name>
</gene>
<name>DNLJ_LIMF3</name>
<keyword id="KW-0227">DNA damage</keyword>
<keyword id="KW-0234">DNA repair</keyword>
<keyword id="KW-0235">DNA replication</keyword>
<keyword id="KW-0436">Ligase</keyword>
<keyword id="KW-0460">Magnesium</keyword>
<keyword id="KW-0464">Manganese</keyword>
<keyword id="KW-0479">Metal-binding</keyword>
<keyword id="KW-0520">NAD</keyword>
<keyword id="KW-1185">Reference proteome</keyword>
<keyword id="KW-0862">Zinc</keyword>
<comment type="function">
    <text evidence="1">DNA ligase that catalyzes the formation of phosphodiester linkages between 5'-phosphoryl and 3'-hydroxyl groups in double-stranded DNA using NAD as a coenzyme and as the energy source for the reaction. It is essential for DNA replication and repair of damaged DNA.</text>
</comment>
<comment type="catalytic activity">
    <reaction evidence="1">
        <text>NAD(+) + (deoxyribonucleotide)n-3'-hydroxyl + 5'-phospho-(deoxyribonucleotide)m = (deoxyribonucleotide)n+m + AMP + beta-nicotinamide D-nucleotide.</text>
        <dbReference type="EC" id="6.5.1.2"/>
    </reaction>
</comment>
<comment type="cofactor">
    <cofactor evidence="1">
        <name>Mg(2+)</name>
        <dbReference type="ChEBI" id="CHEBI:18420"/>
    </cofactor>
    <cofactor evidence="1">
        <name>Mn(2+)</name>
        <dbReference type="ChEBI" id="CHEBI:29035"/>
    </cofactor>
</comment>
<comment type="similarity">
    <text evidence="1">Belongs to the NAD-dependent DNA ligase family. LigA subfamily.</text>
</comment>
<feature type="chain" id="PRO_0000380404" description="DNA ligase">
    <location>
        <begin position="1"/>
        <end position="679"/>
    </location>
</feature>
<feature type="domain" description="BRCT" evidence="1">
    <location>
        <begin position="599"/>
        <end position="679"/>
    </location>
</feature>
<feature type="active site" description="N6-AMP-lysine intermediate" evidence="1">
    <location>
        <position position="126"/>
    </location>
</feature>
<feature type="binding site" evidence="1">
    <location>
        <begin position="43"/>
        <end position="47"/>
    </location>
    <ligand>
        <name>NAD(+)</name>
        <dbReference type="ChEBI" id="CHEBI:57540"/>
    </ligand>
</feature>
<feature type="binding site" evidence="1">
    <location>
        <begin position="92"/>
        <end position="93"/>
    </location>
    <ligand>
        <name>NAD(+)</name>
        <dbReference type="ChEBI" id="CHEBI:57540"/>
    </ligand>
</feature>
<feature type="binding site" evidence="1">
    <location>
        <position position="124"/>
    </location>
    <ligand>
        <name>NAD(+)</name>
        <dbReference type="ChEBI" id="CHEBI:57540"/>
    </ligand>
</feature>
<feature type="binding site" evidence="1">
    <location>
        <position position="147"/>
    </location>
    <ligand>
        <name>NAD(+)</name>
        <dbReference type="ChEBI" id="CHEBI:57540"/>
    </ligand>
</feature>
<feature type="binding site" evidence="1">
    <location>
        <position position="181"/>
    </location>
    <ligand>
        <name>NAD(+)</name>
        <dbReference type="ChEBI" id="CHEBI:57540"/>
    </ligand>
</feature>
<feature type="binding site" evidence="1">
    <location>
        <position position="297"/>
    </location>
    <ligand>
        <name>NAD(+)</name>
        <dbReference type="ChEBI" id="CHEBI:57540"/>
    </ligand>
</feature>
<feature type="binding site" evidence="1">
    <location>
        <position position="321"/>
    </location>
    <ligand>
        <name>NAD(+)</name>
        <dbReference type="ChEBI" id="CHEBI:57540"/>
    </ligand>
</feature>
<feature type="binding site" evidence="1">
    <location>
        <position position="415"/>
    </location>
    <ligand>
        <name>Zn(2+)</name>
        <dbReference type="ChEBI" id="CHEBI:29105"/>
    </ligand>
</feature>
<feature type="binding site" evidence="1">
    <location>
        <position position="418"/>
    </location>
    <ligand>
        <name>Zn(2+)</name>
        <dbReference type="ChEBI" id="CHEBI:29105"/>
    </ligand>
</feature>
<feature type="binding site" evidence="1">
    <location>
        <position position="433"/>
    </location>
    <ligand>
        <name>Zn(2+)</name>
        <dbReference type="ChEBI" id="CHEBI:29105"/>
    </ligand>
</feature>
<feature type="binding site" evidence="1">
    <location>
        <position position="438"/>
    </location>
    <ligand>
        <name>Zn(2+)</name>
        <dbReference type="ChEBI" id="CHEBI:29105"/>
    </ligand>
</feature>
<organism>
    <name type="scientific">Limosilactobacillus fermentum (strain NBRC 3956 / LMG 18251)</name>
    <name type="common">Lactobacillus fermentum</name>
    <dbReference type="NCBI Taxonomy" id="334390"/>
    <lineage>
        <taxon>Bacteria</taxon>
        <taxon>Bacillati</taxon>
        <taxon>Bacillota</taxon>
        <taxon>Bacilli</taxon>
        <taxon>Lactobacillales</taxon>
        <taxon>Lactobacillaceae</taxon>
        <taxon>Limosilactobacillus</taxon>
    </lineage>
</organism>
<accession>B2GDS9</accession>
<evidence type="ECO:0000255" key="1">
    <source>
        <dbReference type="HAMAP-Rule" id="MF_01588"/>
    </source>
</evidence>
<protein>
    <recommendedName>
        <fullName evidence="1">DNA ligase</fullName>
        <ecNumber evidence="1">6.5.1.2</ecNumber>
    </recommendedName>
    <alternativeName>
        <fullName evidence="1">Polydeoxyribonucleotide synthase [NAD(+)]</fullName>
    </alternativeName>
</protein>
<dbReference type="EC" id="6.5.1.2" evidence="1"/>
<dbReference type="EMBL" id="AP008937">
    <property type="protein sequence ID" value="BAG27811.1"/>
    <property type="molecule type" value="Genomic_DNA"/>
</dbReference>
<dbReference type="RefSeq" id="WP_012391582.1">
    <property type="nucleotide sequence ID" value="NC_010610.1"/>
</dbReference>
<dbReference type="SMR" id="B2GDS9"/>
<dbReference type="KEGG" id="lfe:LAF_1475"/>
<dbReference type="eggNOG" id="COG0272">
    <property type="taxonomic scope" value="Bacteria"/>
</dbReference>
<dbReference type="HOGENOM" id="CLU_007764_2_1_9"/>
<dbReference type="Proteomes" id="UP000001697">
    <property type="component" value="Chromosome"/>
</dbReference>
<dbReference type="GO" id="GO:0005829">
    <property type="term" value="C:cytosol"/>
    <property type="evidence" value="ECO:0007669"/>
    <property type="project" value="TreeGrafter"/>
</dbReference>
<dbReference type="GO" id="GO:0003911">
    <property type="term" value="F:DNA ligase (NAD+) activity"/>
    <property type="evidence" value="ECO:0007669"/>
    <property type="project" value="UniProtKB-UniRule"/>
</dbReference>
<dbReference type="GO" id="GO:0046872">
    <property type="term" value="F:metal ion binding"/>
    <property type="evidence" value="ECO:0007669"/>
    <property type="project" value="UniProtKB-KW"/>
</dbReference>
<dbReference type="GO" id="GO:0006281">
    <property type="term" value="P:DNA repair"/>
    <property type="evidence" value="ECO:0007669"/>
    <property type="project" value="UniProtKB-KW"/>
</dbReference>
<dbReference type="GO" id="GO:0006260">
    <property type="term" value="P:DNA replication"/>
    <property type="evidence" value="ECO:0007669"/>
    <property type="project" value="UniProtKB-KW"/>
</dbReference>
<dbReference type="CDD" id="cd17748">
    <property type="entry name" value="BRCT_DNA_ligase_like"/>
    <property type="match status" value="1"/>
</dbReference>
<dbReference type="CDD" id="cd00114">
    <property type="entry name" value="LIGANc"/>
    <property type="match status" value="1"/>
</dbReference>
<dbReference type="FunFam" id="1.10.150.20:FF:000006">
    <property type="entry name" value="DNA ligase"/>
    <property type="match status" value="1"/>
</dbReference>
<dbReference type="FunFam" id="1.10.150.20:FF:000007">
    <property type="entry name" value="DNA ligase"/>
    <property type="match status" value="1"/>
</dbReference>
<dbReference type="FunFam" id="2.40.50.140:FF:000012">
    <property type="entry name" value="DNA ligase"/>
    <property type="match status" value="1"/>
</dbReference>
<dbReference type="FunFam" id="3.30.470.30:FF:000001">
    <property type="entry name" value="DNA ligase"/>
    <property type="match status" value="1"/>
</dbReference>
<dbReference type="Gene3D" id="6.20.10.30">
    <property type="match status" value="1"/>
</dbReference>
<dbReference type="Gene3D" id="1.10.150.20">
    <property type="entry name" value="5' to 3' exonuclease, C-terminal subdomain"/>
    <property type="match status" value="2"/>
</dbReference>
<dbReference type="Gene3D" id="3.40.50.10190">
    <property type="entry name" value="BRCT domain"/>
    <property type="match status" value="1"/>
</dbReference>
<dbReference type="Gene3D" id="3.30.470.30">
    <property type="entry name" value="DNA ligase/mRNA capping enzyme"/>
    <property type="match status" value="1"/>
</dbReference>
<dbReference type="Gene3D" id="1.10.287.610">
    <property type="entry name" value="Helix hairpin bin"/>
    <property type="match status" value="1"/>
</dbReference>
<dbReference type="Gene3D" id="2.40.50.140">
    <property type="entry name" value="Nucleic acid-binding proteins"/>
    <property type="match status" value="1"/>
</dbReference>
<dbReference type="HAMAP" id="MF_01588">
    <property type="entry name" value="DNA_ligase_A"/>
    <property type="match status" value="1"/>
</dbReference>
<dbReference type="InterPro" id="IPR001357">
    <property type="entry name" value="BRCT_dom"/>
</dbReference>
<dbReference type="InterPro" id="IPR036420">
    <property type="entry name" value="BRCT_dom_sf"/>
</dbReference>
<dbReference type="InterPro" id="IPR041663">
    <property type="entry name" value="DisA/LigA_HHH"/>
</dbReference>
<dbReference type="InterPro" id="IPR001679">
    <property type="entry name" value="DNA_ligase"/>
</dbReference>
<dbReference type="InterPro" id="IPR018239">
    <property type="entry name" value="DNA_ligase_AS"/>
</dbReference>
<dbReference type="InterPro" id="IPR033136">
    <property type="entry name" value="DNA_ligase_CS"/>
</dbReference>
<dbReference type="InterPro" id="IPR013839">
    <property type="entry name" value="DNAligase_adenylation"/>
</dbReference>
<dbReference type="InterPro" id="IPR013840">
    <property type="entry name" value="DNAligase_N"/>
</dbReference>
<dbReference type="InterPro" id="IPR012340">
    <property type="entry name" value="NA-bd_OB-fold"/>
</dbReference>
<dbReference type="InterPro" id="IPR004150">
    <property type="entry name" value="NAD_DNA_ligase_OB"/>
</dbReference>
<dbReference type="InterPro" id="IPR010994">
    <property type="entry name" value="RuvA_2-like"/>
</dbReference>
<dbReference type="InterPro" id="IPR004149">
    <property type="entry name" value="Znf_DNAligase_C4"/>
</dbReference>
<dbReference type="NCBIfam" id="TIGR00575">
    <property type="entry name" value="dnlj"/>
    <property type="match status" value="1"/>
</dbReference>
<dbReference type="NCBIfam" id="NF005932">
    <property type="entry name" value="PRK07956.1"/>
    <property type="match status" value="1"/>
</dbReference>
<dbReference type="PANTHER" id="PTHR23389">
    <property type="entry name" value="CHROMOSOME TRANSMISSION FIDELITY FACTOR 18"/>
    <property type="match status" value="1"/>
</dbReference>
<dbReference type="PANTHER" id="PTHR23389:SF9">
    <property type="entry name" value="DNA LIGASE"/>
    <property type="match status" value="1"/>
</dbReference>
<dbReference type="Pfam" id="PF00533">
    <property type="entry name" value="BRCT"/>
    <property type="match status" value="1"/>
</dbReference>
<dbReference type="Pfam" id="PF01653">
    <property type="entry name" value="DNA_ligase_aden"/>
    <property type="match status" value="1"/>
</dbReference>
<dbReference type="Pfam" id="PF03120">
    <property type="entry name" value="DNA_ligase_OB"/>
    <property type="match status" value="1"/>
</dbReference>
<dbReference type="Pfam" id="PF03119">
    <property type="entry name" value="DNA_ligase_ZBD"/>
    <property type="match status" value="1"/>
</dbReference>
<dbReference type="Pfam" id="PF12826">
    <property type="entry name" value="HHH_2"/>
    <property type="match status" value="1"/>
</dbReference>
<dbReference type="Pfam" id="PF14520">
    <property type="entry name" value="HHH_5"/>
    <property type="match status" value="1"/>
</dbReference>
<dbReference type="PIRSF" id="PIRSF001604">
    <property type="entry name" value="LigA"/>
    <property type="match status" value="1"/>
</dbReference>
<dbReference type="SMART" id="SM00292">
    <property type="entry name" value="BRCT"/>
    <property type="match status" value="1"/>
</dbReference>
<dbReference type="SMART" id="SM00532">
    <property type="entry name" value="LIGANc"/>
    <property type="match status" value="1"/>
</dbReference>
<dbReference type="SUPFAM" id="SSF52113">
    <property type="entry name" value="BRCT domain"/>
    <property type="match status" value="1"/>
</dbReference>
<dbReference type="SUPFAM" id="SSF56091">
    <property type="entry name" value="DNA ligase/mRNA capping enzyme, catalytic domain"/>
    <property type="match status" value="1"/>
</dbReference>
<dbReference type="SUPFAM" id="SSF50249">
    <property type="entry name" value="Nucleic acid-binding proteins"/>
    <property type="match status" value="1"/>
</dbReference>
<dbReference type="SUPFAM" id="SSF47781">
    <property type="entry name" value="RuvA domain 2-like"/>
    <property type="match status" value="1"/>
</dbReference>
<dbReference type="PROSITE" id="PS50172">
    <property type="entry name" value="BRCT"/>
    <property type="match status" value="1"/>
</dbReference>
<dbReference type="PROSITE" id="PS01055">
    <property type="entry name" value="DNA_LIGASE_N1"/>
    <property type="match status" value="1"/>
</dbReference>
<dbReference type="PROSITE" id="PS01056">
    <property type="entry name" value="DNA_LIGASE_N2"/>
    <property type="match status" value="1"/>
</dbReference>
<reference key="1">
    <citation type="journal article" date="2008" name="DNA Res.">
        <title>Comparative genome analysis of Lactobacillus reuteri and Lactobacillus fermentum reveal a genomic island for reuterin and cobalamin production.</title>
        <authorList>
            <person name="Morita H."/>
            <person name="Toh H."/>
            <person name="Fukuda S."/>
            <person name="Horikawa H."/>
            <person name="Oshima K."/>
            <person name="Suzuki T."/>
            <person name="Murakami M."/>
            <person name="Hisamatsu S."/>
            <person name="Kato Y."/>
            <person name="Takizawa T."/>
            <person name="Fukuoka H."/>
            <person name="Yoshimura T."/>
            <person name="Itoh K."/>
            <person name="O'Sullivan D.J."/>
            <person name="McKay L.L."/>
            <person name="Ohno H."/>
            <person name="Kikuchi J."/>
            <person name="Masaoka T."/>
            <person name="Hattori M."/>
        </authorList>
    </citation>
    <scope>NUCLEOTIDE SEQUENCE [LARGE SCALE GENOMIC DNA]</scope>
    <source>
        <strain>NBRC 3956 / LMG 18251</strain>
    </source>
</reference>